<sequence length="412" mass="46794">MSRRKQTNPNKVHWDQVFAGLEEQARQAMMKTDFPGDLGSQRQAIQQLRDQDSSSSDSEGDEEETTQDEVSSHTSEEDGGVVKVEKELENTEQPVGGNEVVEHEVTGNLNSDPLLELCQCPLCQLDCGSREQLIAHVYQHTAAVVSAKSYMCPVCGRALSSPGSLGRHLLIHSEDQRSNCAVCGARFTSHATFNSEKLPEVLNMESLPTVHNEGPSSAEGKDIAFSPPVYPAGILLVCNNCAAYRKLLEAQTPSVRKWALRRQNEPLEVRLQRLERERTAKKSRRDNETPEEREVRRMRDREAKRLQRMQETDEQRARRLQRDREAMRLKRANETPEKRQARLIREREAKRLKRRLEKMDMMLRAQFGQDPSAMAALAAEMNFFQLPVSGVELDSQLLGKMAFEEQNSSSLH</sequence>
<gene>
    <name type="primary">ZNF821</name>
</gene>
<organism>
    <name type="scientific">Homo sapiens</name>
    <name type="common">Human</name>
    <dbReference type="NCBI Taxonomy" id="9606"/>
    <lineage>
        <taxon>Eukaryota</taxon>
        <taxon>Metazoa</taxon>
        <taxon>Chordata</taxon>
        <taxon>Craniata</taxon>
        <taxon>Vertebrata</taxon>
        <taxon>Euteleostomi</taxon>
        <taxon>Mammalia</taxon>
        <taxon>Eutheria</taxon>
        <taxon>Euarchontoglires</taxon>
        <taxon>Primates</taxon>
        <taxon>Haplorrhini</taxon>
        <taxon>Catarrhini</taxon>
        <taxon>Hominidae</taxon>
        <taxon>Homo</taxon>
    </lineage>
</organism>
<keyword id="KW-0025">Alternative splicing</keyword>
<keyword id="KW-0175">Coiled coil</keyword>
<keyword id="KW-0238">DNA-binding</keyword>
<keyword id="KW-0479">Metal-binding</keyword>
<keyword id="KW-0539">Nucleus</keyword>
<keyword id="KW-1267">Proteomics identification</keyword>
<keyword id="KW-1185">Reference proteome</keyword>
<keyword id="KW-0677">Repeat</keyword>
<keyword id="KW-0804">Transcription</keyword>
<keyword id="KW-0805">Transcription regulation</keyword>
<keyword id="KW-0862">Zinc</keyword>
<keyword id="KW-0863">Zinc-finger</keyword>
<evidence type="ECO:0000255" key="1"/>
<evidence type="ECO:0000255" key="2">
    <source>
        <dbReference type="PROSITE-ProRule" id="PRU00042"/>
    </source>
</evidence>
<evidence type="ECO:0000256" key="3">
    <source>
        <dbReference type="SAM" id="MobiDB-lite"/>
    </source>
</evidence>
<evidence type="ECO:0000303" key="4">
    <source>
    </source>
</evidence>
<evidence type="ECO:0000303" key="5">
    <source ref="1"/>
</evidence>
<evidence type="ECO:0000305" key="6"/>
<name>ZN821_HUMAN</name>
<feature type="chain" id="PRO_0000317289" description="Zinc finger protein 821">
    <location>
        <begin position="1"/>
        <end position="412"/>
    </location>
</feature>
<feature type="zinc finger region" description="C2H2-type 1" evidence="2">
    <location>
        <begin position="116"/>
        <end position="140"/>
    </location>
</feature>
<feature type="zinc finger region" description="C2H2-type 2" evidence="2">
    <location>
        <begin position="150"/>
        <end position="172"/>
    </location>
</feature>
<feature type="region of interest" description="Disordered" evidence="3">
    <location>
        <begin position="26"/>
        <end position="83"/>
    </location>
</feature>
<feature type="region of interest" description="Disordered" evidence="3">
    <location>
        <begin position="278"/>
        <end position="319"/>
    </location>
</feature>
<feature type="coiled-coil region" evidence="1">
    <location>
        <begin position="257"/>
        <end position="366"/>
    </location>
</feature>
<feature type="compositionally biased region" description="Acidic residues" evidence="3">
    <location>
        <begin position="58"/>
        <end position="67"/>
    </location>
</feature>
<feature type="splice variant" id="VSP_030933" description="In isoform 2." evidence="4 5">
    <location>
        <begin position="16"/>
        <end position="57"/>
    </location>
</feature>
<comment type="function">
    <text>May be involved in transcriptional regulation.</text>
</comment>
<comment type="interaction">
    <interactant intactId="EBI-740865">
        <id>O75541</id>
    </interactant>
    <interactant intactId="EBI-5278764">
        <id>Q96GN5</id>
        <label>CDCA7L</label>
    </interactant>
    <organismsDiffer>false</organismsDiffer>
    <experiments>3</experiments>
</comment>
<comment type="interaction">
    <interactant intactId="EBI-740865">
        <id>O75541</id>
    </interactant>
    <interactant intactId="EBI-720425">
        <id>Q9P1W9</id>
        <label>PIM2</label>
    </interactant>
    <organismsDiffer>false</organismsDiffer>
    <experiments>3</experiments>
</comment>
<comment type="interaction">
    <interactant intactId="EBI-14544035">
        <id>O75541-2</id>
    </interactant>
    <interactant intactId="EBI-739789">
        <id>Q92997</id>
        <label>DVL3</label>
    </interactant>
    <organismsDiffer>false</organismsDiffer>
    <experiments>3</experiments>
</comment>
<comment type="interaction">
    <interactant intactId="EBI-14544035">
        <id>O75541-2</id>
    </interactant>
    <interactant intactId="EBI-11957366">
        <id>Q59EK9-3</id>
        <label>RUNDC3A</label>
    </interactant>
    <organismsDiffer>false</organismsDiffer>
    <experiments>3</experiments>
</comment>
<comment type="subcellular location">
    <subcellularLocation>
        <location evidence="6">Nucleus</location>
    </subcellularLocation>
</comment>
<comment type="alternative products">
    <event type="alternative splicing"/>
    <isoform>
        <id>O75541-1</id>
        <name>1</name>
        <sequence type="displayed"/>
    </isoform>
    <isoform>
        <id>O75541-2</id>
        <name>2</name>
        <sequence type="described" ref="VSP_030933"/>
    </isoform>
</comment>
<comment type="similarity">
    <text evidence="6">Belongs to the krueppel C2H2-type zinc-finger protein family.</text>
</comment>
<reference key="1">
    <citation type="submission" date="1998-06" db="EMBL/GenBank/DDBJ databases">
        <authorList>
            <person name="Yu W."/>
            <person name="Gibbs R.A."/>
        </authorList>
    </citation>
    <scope>NUCLEOTIDE SEQUENCE [LARGE SCALE MRNA] (ISOFORM 2)</scope>
    <source>
        <tissue>Brain</tissue>
    </source>
</reference>
<reference key="2">
    <citation type="journal article" date="2004" name="Nat. Genet.">
        <title>Complete sequencing and characterization of 21,243 full-length human cDNAs.</title>
        <authorList>
            <person name="Ota T."/>
            <person name="Suzuki Y."/>
            <person name="Nishikawa T."/>
            <person name="Otsuki T."/>
            <person name="Sugiyama T."/>
            <person name="Irie R."/>
            <person name="Wakamatsu A."/>
            <person name="Hayashi K."/>
            <person name="Sato H."/>
            <person name="Nagai K."/>
            <person name="Kimura K."/>
            <person name="Makita H."/>
            <person name="Sekine M."/>
            <person name="Obayashi M."/>
            <person name="Nishi T."/>
            <person name="Shibahara T."/>
            <person name="Tanaka T."/>
            <person name="Ishii S."/>
            <person name="Yamamoto J."/>
            <person name="Saito K."/>
            <person name="Kawai Y."/>
            <person name="Isono Y."/>
            <person name="Nakamura Y."/>
            <person name="Nagahari K."/>
            <person name="Murakami K."/>
            <person name="Yasuda T."/>
            <person name="Iwayanagi T."/>
            <person name="Wagatsuma M."/>
            <person name="Shiratori A."/>
            <person name="Sudo H."/>
            <person name="Hosoiri T."/>
            <person name="Kaku Y."/>
            <person name="Kodaira H."/>
            <person name="Kondo H."/>
            <person name="Sugawara M."/>
            <person name="Takahashi M."/>
            <person name="Kanda K."/>
            <person name="Yokoi T."/>
            <person name="Furuya T."/>
            <person name="Kikkawa E."/>
            <person name="Omura Y."/>
            <person name="Abe K."/>
            <person name="Kamihara K."/>
            <person name="Katsuta N."/>
            <person name="Sato K."/>
            <person name="Tanikawa M."/>
            <person name="Yamazaki M."/>
            <person name="Ninomiya K."/>
            <person name="Ishibashi T."/>
            <person name="Yamashita H."/>
            <person name="Murakawa K."/>
            <person name="Fujimori K."/>
            <person name="Tanai H."/>
            <person name="Kimata M."/>
            <person name="Watanabe M."/>
            <person name="Hiraoka S."/>
            <person name="Chiba Y."/>
            <person name="Ishida S."/>
            <person name="Ono Y."/>
            <person name="Takiguchi S."/>
            <person name="Watanabe S."/>
            <person name="Yosida M."/>
            <person name="Hotuta T."/>
            <person name="Kusano J."/>
            <person name="Kanehori K."/>
            <person name="Takahashi-Fujii A."/>
            <person name="Hara H."/>
            <person name="Tanase T.-O."/>
            <person name="Nomura Y."/>
            <person name="Togiya S."/>
            <person name="Komai F."/>
            <person name="Hara R."/>
            <person name="Takeuchi K."/>
            <person name="Arita M."/>
            <person name="Imose N."/>
            <person name="Musashino K."/>
            <person name="Yuuki H."/>
            <person name="Oshima A."/>
            <person name="Sasaki N."/>
            <person name="Aotsuka S."/>
            <person name="Yoshikawa Y."/>
            <person name="Matsunawa H."/>
            <person name="Ichihara T."/>
            <person name="Shiohata N."/>
            <person name="Sano S."/>
            <person name="Moriya S."/>
            <person name="Momiyama H."/>
            <person name="Satoh N."/>
            <person name="Takami S."/>
            <person name="Terashima Y."/>
            <person name="Suzuki O."/>
            <person name="Nakagawa S."/>
            <person name="Senoh A."/>
            <person name="Mizoguchi H."/>
            <person name="Goto Y."/>
            <person name="Shimizu F."/>
            <person name="Wakebe H."/>
            <person name="Hishigaki H."/>
            <person name="Watanabe T."/>
            <person name="Sugiyama A."/>
            <person name="Takemoto M."/>
            <person name="Kawakami B."/>
            <person name="Yamazaki M."/>
            <person name="Watanabe K."/>
            <person name="Kumagai A."/>
            <person name="Itakura S."/>
            <person name="Fukuzumi Y."/>
            <person name="Fujimori Y."/>
            <person name="Komiyama M."/>
            <person name="Tashiro H."/>
            <person name="Tanigami A."/>
            <person name="Fujiwara T."/>
            <person name="Ono T."/>
            <person name="Yamada K."/>
            <person name="Fujii Y."/>
            <person name="Ozaki K."/>
            <person name="Hirao M."/>
            <person name="Ohmori Y."/>
            <person name="Kawabata A."/>
            <person name="Hikiji T."/>
            <person name="Kobatake N."/>
            <person name="Inagaki H."/>
            <person name="Ikema Y."/>
            <person name="Okamoto S."/>
            <person name="Okitani R."/>
            <person name="Kawakami T."/>
            <person name="Noguchi S."/>
            <person name="Itoh T."/>
            <person name="Shigeta K."/>
            <person name="Senba T."/>
            <person name="Matsumura K."/>
            <person name="Nakajima Y."/>
            <person name="Mizuno T."/>
            <person name="Morinaga M."/>
            <person name="Sasaki M."/>
            <person name="Togashi T."/>
            <person name="Oyama M."/>
            <person name="Hata H."/>
            <person name="Watanabe M."/>
            <person name="Komatsu T."/>
            <person name="Mizushima-Sugano J."/>
            <person name="Satoh T."/>
            <person name="Shirai Y."/>
            <person name="Takahashi Y."/>
            <person name="Nakagawa K."/>
            <person name="Okumura K."/>
            <person name="Nagase T."/>
            <person name="Nomura N."/>
            <person name="Kikuchi H."/>
            <person name="Masuho Y."/>
            <person name="Yamashita R."/>
            <person name="Nakai K."/>
            <person name="Yada T."/>
            <person name="Nakamura Y."/>
            <person name="Ohara O."/>
            <person name="Isogai T."/>
            <person name="Sugano S."/>
        </authorList>
    </citation>
    <scope>NUCLEOTIDE SEQUENCE [LARGE SCALE MRNA] (ISOFORM 1)</scope>
    <source>
        <tissue>Colon</tissue>
    </source>
</reference>
<reference key="3">
    <citation type="journal article" date="2004" name="Nature">
        <title>The sequence and analysis of duplication-rich human chromosome 16.</title>
        <authorList>
            <person name="Martin J."/>
            <person name="Han C."/>
            <person name="Gordon L.A."/>
            <person name="Terry A."/>
            <person name="Prabhakar S."/>
            <person name="She X."/>
            <person name="Xie G."/>
            <person name="Hellsten U."/>
            <person name="Chan Y.M."/>
            <person name="Altherr M."/>
            <person name="Couronne O."/>
            <person name="Aerts A."/>
            <person name="Bajorek E."/>
            <person name="Black S."/>
            <person name="Blumer H."/>
            <person name="Branscomb E."/>
            <person name="Brown N.C."/>
            <person name="Bruno W.J."/>
            <person name="Buckingham J.M."/>
            <person name="Callen D.F."/>
            <person name="Campbell C.S."/>
            <person name="Campbell M.L."/>
            <person name="Campbell E.W."/>
            <person name="Caoile C."/>
            <person name="Challacombe J.F."/>
            <person name="Chasteen L.A."/>
            <person name="Chertkov O."/>
            <person name="Chi H.C."/>
            <person name="Christensen M."/>
            <person name="Clark L.M."/>
            <person name="Cohn J.D."/>
            <person name="Denys M."/>
            <person name="Detter J.C."/>
            <person name="Dickson M."/>
            <person name="Dimitrijevic-Bussod M."/>
            <person name="Escobar J."/>
            <person name="Fawcett J.J."/>
            <person name="Flowers D."/>
            <person name="Fotopulos D."/>
            <person name="Glavina T."/>
            <person name="Gomez M."/>
            <person name="Gonzales E."/>
            <person name="Goodstein D."/>
            <person name="Goodwin L.A."/>
            <person name="Grady D.L."/>
            <person name="Grigoriev I."/>
            <person name="Groza M."/>
            <person name="Hammon N."/>
            <person name="Hawkins T."/>
            <person name="Haydu L."/>
            <person name="Hildebrand C.E."/>
            <person name="Huang W."/>
            <person name="Israni S."/>
            <person name="Jett J."/>
            <person name="Jewett P.B."/>
            <person name="Kadner K."/>
            <person name="Kimball H."/>
            <person name="Kobayashi A."/>
            <person name="Krawczyk M.-C."/>
            <person name="Leyba T."/>
            <person name="Longmire J.L."/>
            <person name="Lopez F."/>
            <person name="Lou Y."/>
            <person name="Lowry S."/>
            <person name="Ludeman T."/>
            <person name="Manohar C.F."/>
            <person name="Mark G.A."/>
            <person name="McMurray K.L."/>
            <person name="Meincke L.J."/>
            <person name="Morgan J."/>
            <person name="Moyzis R.K."/>
            <person name="Mundt M.O."/>
            <person name="Munk A.C."/>
            <person name="Nandkeshwar R.D."/>
            <person name="Pitluck S."/>
            <person name="Pollard M."/>
            <person name="Predki P."/>
            <person name="Parson-Quintana B."/>
            <person name="Ramirez L."/>
            <person name="Rash S."/>
            <person name="Retterer J."/>
            <person name="Ricke D.O."/>
            <person name="Robinson D.L."/>
            <person name="Rodriguez A."/>
            <person name="Salamov A."/>
            <person name="Saunders E.H."/>
            <person name="Scott D."/>
            <person name="Shough T."/>
            <person name="Stallings R.L."/>
            <person name="Stalvey M."/>
            <person name="Sutherland R.D."/>
            <person name="Tapia R."/>
            <person name="Tesmer J.G."/>
            <person name="Thayer N."/>
            <person name="Thompson L.S."/>
            <person name="Tice H."/>
            <person name="Torney D.C."/>
            <person name="Tran-Gyamfi M."/>
            <person name="Tsai M."/>
            <person name="Ulanovsky L.E."/>
            <person name="Ustaszewska A."/>
            <person name="Vo N."/>
            <person name="White P.S."/>
            <person name="Williams A.L."/>
            <person name="Wills P.L."/>
            <person name="Wu J.-R."/>
            <person name="Wu K."/>
            <person name="Yang J."/>
            <person name="DeJong P."/>
            <person name="Bruce D."/>
            <person name="Doggett N.A."/>
            <person name="Deaven L."/>
            <person name="Schmutz J."/>
            <person name="Grimwood J."/>
            <person name="Richardson P."/>
            <person name="Rokhsar D.S."/>
            <person name="Eichler E.E."/>
            <person name="Gilna P."/>
            <person name="Lucas S.M."/>
            <person name="Myers R.M."/>
            <person name="Rubin E.M."/>
            <person name="Pennacchio L.A."/>
        </authorList>
    </citation>
    <scope>NUCLEOTIDE SEQUENCE [LARGE SCALE GENOMIC DNA]</scope>
</reference>
<reference key="4">
    <citation type="submission" date="2005-09" db="EMBL/GenBank/DDBJ databases">
        <authorList>
            <person name="Mural R.J."/>
            <person name="Istrail S."/>
            <person name="Sutton G.G."/>
            <person name="Florea L."/>
            <person name="Halpern A.L."/>
            <person name="Mobarry C.M."/>
            <person name="Lippert R."/>
            <person name="Walenz B."/>
            <person name="Shatkay H."/>
            <person name="Dew I."/>
            <person name="Miller J.R."/>
            <person name="Flanigan M.J."/>
            <person name="Edwards N.J."/>
            <person name="Bolanos R."/>
            <person name="Fasulo D."/>
            <person name="Halldorsson B.V."/>
            <person name="Hannenhalli S."/>
            <person name="Turner R."/>
            <person name="Yooseph S."/>
            <person name="Lu F."/>
            <person name="Nusskern D.R."/>
            <person name="Shue B.C."/>
            <person name="Zheng X.H."/>
            <person name="Zhong F."/>
            <person name="Delcher A.L."/>
            <person name="Huson D.H."/>
            <person name="Kravitz S.A."/>
            <person name="Mouchard L."/>
            <person name="Reinert K."/>
            <person name="Remington K.A."/>
            <person name="Clark A.G."/>
            <person name="Waterman M.S."/>
            <person name="Eichler E.E."/>
            <person name="Adams M.D."/>
            <person name="Hunkapiller M.W."/>
            <person name="Myers E.W."/>
            <person name="Venter J.C."/>
        </authorList>
    </citation>
    <scope>NUCLEOTIDE SEQUENCE [LARGE SCALE GENOMIC DNA]</scope>
</reference>
<reference key="5">
    <citation type="journal article" date="2004" name="Genome Res.">
        <title>The status, quality, and expansion of the NIH full-length cDNA project: the Mammalian Gene Collection (MGC).</title>
        <authorList>
            <consortium name="The MGC Project Team"/>
        </authorList>
    </citation>
    <scope>NUCLEOTIDE SEQUENCE [LARGE SCALE MRNA] (ISOFORM 2)</scope>
    <source>
        <tissue>Uterus</tissue>
    </source>
</reference>
<dbReference type="EMBL" id="AF070588">
    <property type="protein sequence ID" value="AAC28648.1"/>
    <property type="molecule type" value="mRNA"/>
</dbReference>
<dbReference type="EMBL" id="AK296603">
    <property type="protein sequence ID" value="BAG59216.1"/>
    <property type="molecule type" value="mRNA"/>
</dbReference>
<dbReference type="EMBL" id="AC009127">
    <property type="status" value="NOT_ANNOTATED_CDS"/>
    <property type="molecule type" value="Genomic_DNA"/>
</dbReference>
<dbReference type="EMBL" id="AC010653">
    <property type="status" value="NOT_ANNOTATED_CDS"/>
    <property type="molecule type" value="Genomic_DNA"/>
</dbReference>
<dbReference type="EMBL" id="CH471166">
    <property type="protein sequence ID" value="EAW59211.1"/>
    <property type="molecule type" value="Genomic_DNA"/>
</dbReference>
<dbReference type="EMBL" id="CH471166">
    <property type="protein sequence ID" value="EAW59213.1"/>
    <property type="molecule type" value="Genomic_DNA"/>
</dbReference>
<dbReference type="EMBL" id="CH471166">
    <property type="protein sequence ID" value="EAW59214.1"/>
    <property type="molecule type" value="Genomic_DNA"/>
</dbReference>
<dbReference type="EMBL" id="CH471166">
    <property type="protein sequence ID" value="EAW59219.1"/>
    <property type="molecule type" value="Genomic_DNA"/>
</dbReference>
<dbReference type="EMBL" id="BC012116">
    <property type="protein sequence ID" value="AAH12116.1"/>
    <property type="molecule type" value="mRNA"/>
</dbReference>
<dbReference type="CCDS" id="CCDS32481.1">
    <molecule id="O75541-2"/>
</dbReference>
<dbReference type="CCDS" id="CCDS56006.1">
    <molecule id="O75541-1"/>
</dbReference>
<dbReference type="RefSeq" id="NP_001188481.1">
    <molecule id="O75541-1"/>
    <property type="nucleotide sequence ID" value="NM_001201552.2"/>
</dbReference>
<dbReference type="RefSeq" id="NP_001188482.1">
    <molecule id="O75541-1"/>
    <property type="nucleotide sequence ID" value="NM_001201553.1"/>
</dbReference>
<dbReference type="RefSeq" id="NP_001188483.1">
    <property type="nucleotide sequence ID" value="NM_001201554.1"/>
</dbReference>
<dbReference type="RefSeq" id="NP_001188485.1">
    <property type="nucleotide sequence ID" value="NM_001201556.1"/>
</dbReference>
<dbReference type="RefSeq" id="NP_001363226.1">
    <molecule id="O75541-1"/>
    <property type="nucleotide sequence ID" value="NM_001376297.1"/>
</dbReference>
<dbReference type="RefSeq" id="NP_001363227.1">
    <molecule id="O75541-1"/>
    <property type="nucleotide sequence ID" value="NM_001376298.1"/>
</dbReference>
<dbReference type="RefSeq" id="NP_001363228.1">
    <molecule id="O75541-1"/>
    <property type="nucleotide sequence ID" value="NM_001376299.1"/>
</dbReference>
<dbReference type="RefSeq" id="NP_060000.1">
    <property type="nucleotide sequence ID" value="NM_017530.2"/>
</dbReference>
<dbReference type="RefSeq" id="XP_005256090.1">
    <property type="nucleotide sequence ID" value="XM_005256033.2"/>
</dbReference>
<dbReference type="RefSeq" id="XP_006721296.1">
    <property type="nucleotide sequence ID" value="XM_006721233.1"/>
</dbReference>
<dbReference type="RefSeq" id="XP_011521513.1">
    <molecule id="O75541-1"/>
    <property type="nucleotide sequence ID" value="XM_011523211.4"/>
</dbReference>
<dbReference type="RefSeq" id="XP_016878898.1">
    <property type="nucleotide sequence ID" value="XM_017023409.1"/>
</dbReference>
<dbReference type="RefSeq" id="XP_016878899.1">
    <property type="nucleotide sequence ID" value="XM_017023410.1"/>
</dbReference>
<dbReference type="RefSeq" id="XP_016878900.1">
    <property type="nucleotide sequence ID" value="XM_017023411.1"/>
</dbReference>
<dbReference type="RefSeq" id="XP_016878901.1">
    <property type="nucleotide sequence ID" value="XM_017023412.1"/>
</dbReference>
<dbReference type="RefSeq" id="XP_016878903.1">
    <property type="nucleotide sequence ID" value="XM_017023414.1"/>
</dbReference>
<dbReference type="RefSeq" id="XP_047290298.1">
    <molecule id="O75541-1"/>
    <property type="nucleotide sequence ID" value="XM_047434342.1"/>
</dbReference>
<dbReference type="RefSeq" id="XP_054169396.1">
    <molecule id="O75541-1"/>
    <property type="nucleotide sequence ID" value="XM_054313421.1"/>
</dbReference>
<dbReference type="SMR" id="O75541"/>
<dbReference type="BioGRID" id="120720">
    <property type="interactions" value="13"/>
</dbReference>
<dbReference type="FunCoup" id="O75541">
    <property type="interactions" value="779"/>
</dbReference>
<dbReference type="IntAct" id="O75541">
    <property type="interactions" value="13"/>
</dbReference>
<dbReference type="MINT" id="O75541"/>
<dbReference type="STRING" id="9606.ENSP00000398089"/>
<dbReference type="GlyCosmos" id="O75541">
    <property type="glycosylation" value="1 site, 1 glycan"/>
</dbReference>
<dbReference type="GlyGen" id="O75541">
    <property type="glycosylation" value="2 sites, 1 N-linked glycan (1 site), 1 O-linked glycan (1 site)"/>
</dbReference>
<dbReference type="iPTMnet" id="O75541"/>
<dbReference type="PhosphoSitePlus" id="O75541"/>
<dbReference type="BioMuta" id="ZNF821"/>
<dbReference type="jPOST" id="O75541"/>
<dbReference type="MassIVE" id="O75541"/>
<dbReference type="PaxDb" id="9606-ENSP00000398089"/>
<dbReference type="PeptideAtlas" id="O75541"/>
<dbReference type="ProteomicsDB" id="50075">
    <molecule id="O75541-1"/>
</dbReference>
<dbReference type="ProteomicsDB" id="50076">
    <molecule id="O75541-2"/>
</dbReference>
<dbReference type="Antibodypedia" id="16662">
    <property type="antibodies" value="88 antibodies from 21 providers"/>
</dbReference>
<dbReference type="DNASU" id="55565"/>
<dbReference type="Ensembl" id="ENST00000425432.6">
    <molecule id="O75541-1"/>
    <property type="protein sequence ID" value="ENSP00000398089.1"/>
    <property type="gene ID" value="ENSG00000102984.15"/>
</dbReference>
<dbReference type="Ensembl" id="ENST00000565601.5">
    <molecule id="O75541-1"/>
    <property type="protein sequence ID" value="ENSP00000455648.1"/>
    <property type="gene ID" value="ENSG00000102984.15"/>
</dbReference>
<dbReference type="GeneID" id="55565"/>
<dbReference type="KEGG" id="hsa:55565"/>
<dbReference type="MANE-Select" id="ENST00000425432.6">
    <property type="protein sequence ID" value="ENSP00000398089.1"/>
    <property type="RefSeq nucleotide sequence ID" value="NM_001201552.2"/>
    <property type="RefSeq protein sequence ID" value="NP_001188481.1"/>
</dbReference>
<dbReference type="UCSC" id="uc002fbf.4">
    <molecule id="O75541-1"/>
    <property type="organism name" value="human"/>
</dbReference>
<dbReference type="AGR" id="HGNC:28043"/>
<dbReference type="CTD" id="55565"/>
<dbReference type="DisGeNET" id="55565"/>
<dbReference type="GeneCards" id="ZNF821"/>
<dbReference type="HGNC" id="HGNC:28043">
    <property type="gene designation" value="ZNF821"/>
</dbReference>
<dbReference type="HPA" id="ENSG00000102984">
    <property type="expression patterns" value="Tissue enhanced (brain, testis)"/>
</dbReference>
<dbReference type="neXtProt" id="NX_O75541"/>
<dbReference type="OpenTargets" id="ENSG00000102984"/>
<dbReference type="PharmGKB" id="PA162410689"/>
<dbReference type="VEuPathDB" id="HostDB:ENSG00000102984"/>
<dbReference type="eggNOG" id="KOG1721">
    <property type="taxonomic scope" value="Eukaryota"/>
</dbReference>
<dbReference type="GeneTree" id="ENSGT00940000159421"/>
<dbReference type="InParanoid" id="O75541"/>
<dbReference type="OMA" id="NNCVAYR"/>
<dbReference type="OrthoDB" id="9898763at2759"/>
<dbReference type="PAN-GO" id="O75541">
    <property type="GO annotations" value="3 GO annotations based on evolutionary models"/>
</dbReference>
<dbReference type="PhylomeDB" id="O75541"/>
<dbReference type="TreeFam" id="TF326851"/>
<dbReference type="PathwayCommons" id="O75541"/>
<dbReference type="SignaLink" id="O75541"/>
<dbReference type="BioGRID-ORCS" id="55565">
    <property type="hits" value="10 hits in 1174 CRISPR screens"/>
</dbReference>
<dbReference type="ChiTaRS" id="ZNF821">
    <property type="organism name" value="human"/>
</dbReference>
<dbReference type="GenomeRNAi" id="55565"/>
<dbReference type="Pharos" id="O75541">
    <property type="development level" value="Tdark"/>
</dbReference>
<dbReference type="PRO" id="PR:O75541"/>
<dbReference type="Proteomes" id="UP000005640">
    <property type="component" value="Chromosome 16"/>
</dbReference>
<dbReference type="RNAct" id="O75541">
    <property type="molecule type" value="protein"/>
</dbReference>
<dbReference type="Bgee" id="ENSG00000102984">
    <property type="expression patterns" value="Expressed in cortical plate and 114 other cell types or tissues"/>
</dbReference>
<dbReference type="ExpressionAtlas" id="O75541">
    <property type="expression patterns" value="baseline and differential"/>
</dbReference>
<dbReference type="GO" id="GO:0005634">
    <property type="term" value="C:nucleus"/>
    <property type="evidence" value="ECO:0007669"/>
    <property type="project" value="UniProtKB-SubCell"/>
</dbReference>
<dbReference type="GO" id="GO:0003700">
    <property type="term" value="F:DNA-binding transcription factor activity"/>
    <property type="evidence" value="ECO:0000318"/>
    <property type="project" value="GO_Central"/>
</dbReference>
<dbReference type="GO" id="GO:0000978">
    <property type="term" value="F:RNA polymerase II cis-regulatory region sequence-specific DNA binding"/>
    <property type="evidence" value="ECO:0000318"/>
    <property type="project" value="GO_Central"/>
</dbReference>
<dbReference type="GO" id="GO:1990837">
    <property type="term" value="F:sequence-specific double-stranded DNA binding"/>
    <property type="evidence" value="ECO:0000314"/>
    <property type="project" value="ARUK-UCL"/>
</dbReference>
<dbReference type="GO" id="GO:0008270">
    <property type="term" value="F:zinc ion binding"/>
    <property type="evidence" value="ECO:0007669"/>
    <property type="project" value="UniProtKB-KW"/>
</dbReference>
<dbReference type="GO" id="GO:0006357">
    <property type="term" value="P:regulation of transcription by RNA polymerase II"/>
    <property type="evidence" value="ECO:0000318"/>
    <property type="project" value="GO_Central"/>
</dbReference>
<dbReference type="FunFam" id="3.30.160.60:FF:000582">
    <property type="entry name" value="zinc finger protein 821 isoform X1"/>
    <property type="match status" value="1"/>
</dbReference>
<dbReference type="Gene3D" id="3.30.160.60">
    <property type="entry name" value="Classic Zinc Finger"/>
    <property type="match status" value="1"/>
</dbReference>
<dbReference type="InterPro" id="IPR036236">
    <property type="entry name" value="Znf_C2H2_sf"/>
</dbReference>
<dbReference type="InterPro" id="IPR013087">
    <property type="entry name" value="Znf_C2H2_type"/>
</dbReference>
<dbReference type="PANTHER" id="PTHR24394:SF29">
    <property type="entry name" value="MYONEURIN"/>
    <property type="match status" value="1"/>
</dbReference>
<dbReference type="PANTHER" id="PTHR24394">
    <property type="entry name" value="ZINC FINGER PROTEIN"/>
    <property type="match status" value="1"/>
</dbReference>
<dbReference type="SMART" id="SM00355">
    <property type="entry name" value="ZnF_C2H2"/>
    <property type="match status" value="2"/>
</dbReference>
<dbReference type="SUPFAM" id="SSF57667">
    <property type="entry name" value="beta-beta-alpha zinc fingers"/>
    <property type="match status" value="1"/>
</dbReference>
<dbReference type="PROSITE" id="PS00028">
    <property type="entry name" value="ZINC_FINGER_C2H2_1"/>
    <property type="match status" value="2"/>
</dbReference>
<dbReference type="PROSITE" id="PS50157">
    <property type="entry name" value="ZINC_FINGER_C2H2_2"/>
    <property type="match status" value="1"/>
</dbReference>
<proteinExistence type="evidence at protein level"/>
<accession>O75541</accession>
<accession>A6NK48</accession>
<accession>B4DKK4</accession>
<accession>D3DWS3</accession>
<protein>
    <recommendedName>
        <fullName>Zinc finger protein 821</fullName>
    </recommendedName>
</protein>